<keyword id="KW-0067">ATP-binding</keyword>
<keyword id="KW-0414">Isoprene biosynthesis</keyword>
<keyword id="KW-0418">Kinase</keyword>
<keyword id="KW-0547">Nucleotide-binding</keyword>
<keyword id="KW-0808">Transferase</keyword>
<reference key="1">
    <citation type="submission" date="2006-12" db="EMBL/GenBank/DDBJ databases">
        <authorList>
            <person name="Hendrix L."/>
            <person name="Mohamoud Y."/>
            <person name="Radune D."/>
            <person name="Shvartsbeyn A."/>
            <person name="Daugherty S."/>
            <person name="Dodson R."/>
            <person name="Durkin A.S."/>
            <person name="Harkins D."/>
            <person name="Huot H."/>
            <person name="Kothari S.P."/>
            <person name="Madupu R."/>
            <person name="Li J."/>
            <person name="Nelson W.C."/>
            <person name="Shrivastava S."/>
            <person name="Giglio M.G."/>
            <person name="Haft D."/>
            <person name="Selengut J."/>
            <person name="Fraser-Ligget C."/>
            <person name="Seshadri R."/>
        </authorList>
    </citation>
    <scope>NUCLEOTIDE SEQUENCE [LARGE SCALE GENOMIC DNA]</scope>
    <source>
        <strain>ATCC 35685 / KC583 / Herrer 020/F12,63</strain>
    </source>
</reference>
<sequence>MISTVQDSLEGHFHVLTPIKLNLALHIVGQRTDGYHLLESLVYFSLSGDCLSYAPCERDRFILTGPFAKGLSCNSINLAVRARDFMHKTFPRSAKPSSFQLMKTLPVASGIGGGSGDAASILNILRQKWKLDCSCEELAEMSLALGADVPMCLFALEYQQPLFVKGIGNDVTRLEEACSIAMVLVNHGQKIATETIFNALEKRNHPPLKINPVALKTVSSLVEVLQETRNDLFIPALKIAPQLAEVLSTLDESGSLFSRMSGSGATCFGIFKDQQAAQKAAAFIKSMHPNWFVKSIITLGRSSQ</sequence>
<comment type="function">
    <text evidence="1">Catalyzes the phosphorylation of the position 2 hydroxy group of 4-diphosphocytidyl-2C-methyl-D-erythritol.</text>
</comment>
<comment type="catalytic activity">
    <reaction evidence="1">
        <text>4-CDP-2-C-methyl-D-erythritol + ATP = 4-CDP-2-C-methyl-D-erythritol 2-phosphate + ADP + H(+)</text>
        <dbReference type="Rhea" id="RHEA:18437"/>
        <dbReference type="ChEBI" id="CHEBI:15378"/>
        <dbReference type="ChEBI" id="CHEBI:30616"/>
        <dbReference type="ChEBI" id="CHEBI:57823"/>
        <dbReference type="ChEBI" id="CHEBI:57919"/>
        <dbReference type="ChEBI" id="CHEBI:456216"/>
        <dbReference type="EC" id="2.7.1.148"/>
    </reaction>
</comment>
<comment type="pathway">
    <text evidence="1">Isoprenoid biosynthesis; isopentenyl diphosphate biosynthesis via DXP pathway; isopentenyl diphosphate from 1-deoxy-D-xylulose 5-phosphate: step 3/6.</text>
</comment>
<comment type="similarity">
    <text evidence="1">Belongs to the GHMP kinase family. IspE subfamily.</text>
</comment>
<accession>A1URV3</accession>
<evidence type="ECO:0000255" key="1">
    <source>
        <dbReference type="HAMAP-Rule" id="MF_00061"/>
    </source>
</evidence>
<name>ISPE_BARBK</name>
<dbReference type="EC" id="2.7.1.148" evidence="1"/>
<dbReference type="EMBL" id="CP000524">
    <property type="protein sequence ID" value="ABM45227.1"/>
    <property type="molecule type" value="Genomic_DNA"/>
</dbReference>
<dbReference type="RefSeq" id="WP_005766384.1">
    <property type="nucleotide sequence ID" value="NC_008783.1"/>
</dbReference>
<dbReference type="SMR" id="A1URV3"/>
<dbReference type="STRING" id="360095.BARBAKC583_0387"/>
<dbReference type="GeneID" id="4684924"/>
<dbReference type="KEGG" id="bbk:BARBAKC583_0387"/>
<dbReference type="PATRIC" id="fig|360095.6.peg.370"/>
<dbReference type="eggNOG" id="COG1947">
    <property type="taxonomic scope" value="Bacteria"/>
</dbReference>
<dbReference type="HOGENOM" id="CLU_053057_1_0_5"/>
<dbReference type="OrthoDB" id="9809438at2"/>
<dbReference type="UniPathway" id="UPA00056">
    <property type="reaction ID" value="UER00094"/>
</dbReference>
<dbReference type="Proteomes" id="UP000000643">
    <property type="component" value="Chromosome"/>
</dbReference>
<dbReference type="GO" id="GO:0050515">
    <property type="term" value="F:4-(cytidine 5'-diphospho)-2-C-methyl-D-erythritol kinase activity"/>
    <property type="evidence" value="ECO:0007669"/>
    <property type="project" value="UniProtKB-UniRule"/>
</dbReference>
<dbReference type="GO" id="GO:0005524">
    <property type="term" value="F:ATP binding"/>
    <property type="evidence" value="ECO:0007669"/>
    <property type="project" value="UniProtKB-UniRule"/>
</dbReference>
<dbReference type="GO" id="GO:0019288">
    <property type="term" value="P:isopentenyl diphosphate biosynthetic process, methylerythritol 4-phosphate pathway"/>
    <property type="evidence" value="ECO:0007669"/>
    <property type="project" value="UniProtKB-UniRule"/>
</dbReference>
<dbReference type="GO" id="GO:0016114">
    <property type="term" value="P:terpenoid biosynthetic process"/>
    <property type="evidence" value="ECO:0007669"/>
    <property type="project" value="InterPro"/>
</dbReference>
<dbReference type="Gene3D" id="3.30.230.10">
    <property type="match status" value="1"/>
</dbReference>
<dbReference type="Gene3D" id="3.30.70.890">
    <property type="entry name" value="GHMP kinase, C-terminal domain"/>
    <property type="match status" value="1"/>
</dbReference>
<dbReference type="HAMAP" id="MF_00061">
    <property type="entry name" value="IspE"/>
    <property type="match status" value="1"/>
</dbReference>
<dbReference type="InterPro" id="IPR013750">
    <property type="entry name" value="GHMP_kinase_C_dom"/>
</dbReference>
<dbReference type="InterPro" id="IPR036554">
    <property type="entry name" value="GHMP_kinase_C_sf"/>
</dbReference>
<dbReference type="InterPro" id="IPR006204">
    <property type="entry name" value="GHMP_kinase_N_dom"/>
</dbReference>
<dbReference type="InterPro" id="IPR004424">
    <property type="entry name" value="IspE"/>
</dbReference>
<dbReference type="InterPro" id="IPR020568">
    <property type="entry name" value="Ribosomal_Su5_D2-typ_SF"/>
</dbReference>
<dbReference type="InterPro" id="IPR014721">
    <property type="entry name" value="Ribsml_uS5_D2-typ_fold_subgr"/>
</dbReference>
<dbReference type="NCBIfam" id="TIGR00154">
    <property type="entry name" value="ispE"/>
    <property type="match status" value="1"/>
</dbReference>
<dbReference type="NCBIfam" id="NF011202">
    <property type="entry name" value="PRK14608.1"/>
    <property type="match status" value="1"/>
</dbReference>
<dbReference type="PANTHER" id="PTHR43527">
    <property type="entry name" value="4-DIPHOSPHOCYTIDYL-2-C-METHYL-D-ERYTHRITOL KINASE, CHLOROPLASTIC"/>
    <property type="match status" value="1"/>
</dbReference>
<dbReference type="PANTHER" id="PTHR43527:SF2">
    <property type="entry name" value="4-DIPHOSPHOCYTIDYL-2-C-METHYL-D-ERYTHRITOL KINASE, CHLOROPLASTIC"/>
    <property type="match status" value="1"/>
</dbReference>
<dbReference type="Pfam" id="PF08544">
    <property type="entry name" value="GHMP_kinases_C"/>
    <property type="match status" value="1"/>
</dbReference>
<dbReference type="Pfam" id="PF00288">
    <property type="entry name" value="GHMP_kinases_N"/>
    <property type="match status" value="1"/>
</dbReference>
<dbReference type="PIRSF" id="PIRSF010376">
    <property type="entry name" value="IspE"/>
    <property type="match status" value="1"/>
</dbReference>
<dbReference type="SUPFAM" id="SSF55060">
    <property type="entry name" value="GHMP Kinase, C-terminal domain"/>
    <property type="match status" value="1"/>
</dbReference>
<dbReference type="SUPFAM" id="SSF54211">
    <property type="entry name" value="Ribosomal protein S5 domain 2-like"/>
    <property type="match status" value="1"/>
</dbReference>
<proteinExistence type="inferred from homology"/>
<gene>
    <name evidence="1" type="primary">ispE</name>
    <name type="ordered locus">BARBAKC583_0387</name>
</gene>
<protein>
    <recommendedName>
        <fullName evidence="1">4-diphosphocytidyl-2-C-methyl-D-erythritol kinase</fullName>
        <shortName evidence="1">CMK</shortName>
        <ecNumber evidence="1">2.7.1.148</ecNumber>
    </recommendedName>
    <alternativeName>
        <fullName evidence="1">4-(cytidine-5'-diphospho)-2-C-methyl-D-erythritol kinase</fullName>
    </alternativeName>
</protein>
<organism>
    <name type="scientific">Bartonella bacilliformis (strain ATCC 35685 / KC583 / Herrer 020/F12,63)</name>
    <dbReference type="NCBI Taxonomy" id="360095"/>
    <lineage>
        <taxon>Bacteria</taxon>
        <taxon>Pseudomonadati</taxon>
        <taxon>Pseudomonadota</taxon>
        <taxon>Alphaproteobacteria</taxon>
        <taxon>Hyphomicrobiales</taxon>
        <taxon>Bartonellaceae</taxon>
        <taxon>Bartonella</taxon>
    </lineage>
</organism>
<feature type="chain" id="PRO_1000007813" description="4-diphosphocytidyl-2-C-methyl-D-erythritol kinase">
    <location>
        <begin position="1"/>
        <end position="304"/>
    </location>
</feature>
<feature type="active site" evidence="1">
    <location>
        <position position="20"/>
    </location>
</feature>
<feature type="active site" evidence="1">
    <location>
        <position position="148"/>
    </location>
</feature>
<feature type="binding site" evidence="1">
    <location>
        <begin position="106"/>
        <end position="116"/>
    </location>
    <ligand>
        <name>ATP</name>
        <dbReference type="ChEBI" id="CHEBI:30616"/>
    </ligand>
</feature>